<dbReference type="EC" id="2.3.1.234" evidence="1"/>
<dbReference type="EMBL" id="CP001110">
    <property type="protein sequence ID" value="ACF42557.1"/>
    <property type="molecule type" value="Genomic_DNA"/>
</dbReference>
<dbReference type="RefSeq" id="WP_012507053.1">
    <property type="nucleotide sequence ID" value="NC_011060.1"/>
</dbReference>
<dbReference type="SMR" id="B4SBN2"/>
<dbReference type="STRING" id="324925.Ppha_0220"/>
<dbReference type="KEGG" id="pph:Ppha_0220"/>
<dbReference type="eggNOG" id="COG0533">
    <property type="taxonomic scope" value="Bacteria"/>
</dbReference>
<dbReference type="HOGENOM" id="CLU_023208_0_2_10"/>
<dbReference type="OrthoDB" id="9806197at2"/>
<dbReference type="Proteomes" id="UP000002724">
    <property type="component" value="Chromosome"/>
</dbReference>
<dbReference type="GO" id="GO:0005737">
    <property type="term" value="C:cytoplasm"/>
    <property type="evidence" value="ECO:0007669"/>
    <property type="project" value="UniProtKB-SubCell"/>
</dbReference>
<dbReference type="GO" id="GO:0005506">
    <property type="term" value="F:iron ion binding"/>
    <property type="evidence" value="ECO:0007669"/>
    <property type="project" value="UniProtKB-UniRule"/>
</dbReference>
<dbReference type="GO" id="GO:0061711">
    <property type="term" value="F:N(6)-L-threonylcarbamoyladenine synthase activity"/>
    <property type="evidence" value="ECO:0007669"/>
    <property type="project" value="UniProtKB-EC"/>
</dbReference>
<dbReference type="GO" id="GO:0002949">
    <property type="term" value="P:tRNA threonylcarbamoyladenosine modification"/>
    <property type="evidence" value="ECO:0007669"/>
    <property type="project" value="UniProtKB-UniRule"/>
</dbReference>
<dbReference type="CDD" id="cd24133">
    <property type="entry name" value="ASKHA_NBD_TsaD_bac"/>
    <property type="match status" value="1"/>
</dbReference>
<dbReference type="FunFam" id="3.30.420.40:FF:000012">
    <property type="entry name" value="tRNA N6-adenosine threonylcarbamoyltransferase"/>
    <property type="match status" value="1"/>
</dbReference>
<dbReference type="FunFam" id="3.30.420.40:FF:000040">
    <property type="entry name" value="tRNA N6-adenosine threonylcarbamoyltransferase"/>
    <property type="match status" value="1"/>
</dbReference>
<dbReference type="Gene3D" id="3.30.420.40">
    <property type="match status" value="2"/>
</dbReference>
<dbReference type="HAMAP" id="MF_01445">
    <property type="entry name" value="TsaD"/>
    <property type="match status" value="1"/>
</dbReference>
<dbReference type="InterPro" id="IPR043129">
    <property type="entry name" value="ATPase_NBD"/>
</dbReference>
<dbReference type="InterPro" id="IPR000905">
    <property type="entry name" value="Gcp-like_dom"/>
</dbReference>
<dbReference type="InterPro" id="IPR017861">
    <property type="entry name" value="KAE1/TsaD"/>
</dbReference>
<dbReference type="InterPro" id="IPR022450">
    <property type="entry name" value="TsaD"/>
</dbReference>
<dbReference type="NCBIfam" id="TIGR00329">
    <property type="entry name" value="gcp_kae1"/>
    <property type="match status" value="1"/>
</dbReference>
<dbReference type="NCBIfam" id="TIGR03723">
    <property type="entry name" value="T6A_TsaD_YgjD"/>
    <property type="match status" value="1"/>
</dbReference>
<dbReference type="PANTHER" id="PTHR11735">
    <property type="entry name" value="TRNA N6-ADENOSINE THREONYLCARBAMOYLTRANSFERASE"/>
    <property type="match status" value="1"/>
</dbReference>
<dbReference type="PANTHER" id="PTHR11735:SF6">
    <property type="entry name" value="TRNA N6-ADENOSINE THREONYLCARBAMOYLTRANSFERASE, MITOCHONDRIAL"/>
    <property type="match status" value="1"/>
</dbReference>
<dbReference type="Pfam" id="PF00814">
    <property type="entry name" value="TsaD"/>
    <property type="match status" value="1"/>
</dbReference>
<dbReference type="PRINTS" id="PR00789">
    <property type="entry name" value="OSIALOPTASE"/>
</dbReference>
<dbReference type="SUPFAM" id="SSF53067">
    <property type="entry name" value="Actin-like ATPase domain"/>
    <property type="match status" value="1"/>
</dbReference>
<evidence type="ECO:0000255" key="1">
    <source>
        <dbReference type="HAMAP-Rule" id="MF_01445"/>
    </source>
</evidence>
<comment type="function">
    <text evidence="1">Required for the formation of a threonylcarbamoyl group on adenosine at position 37 (t(6)A37) in tRNAs that read codons beginning with adenine. Is involved in the transfer of the threonylcarbamoyl moiety of threonylcarbamoyl-AMP (TC-AMP) to the N6 group of A37, together with TsaE and TsaB. TsaD likely plays a direct catalytic role in this reaction.</text>
</comment>
<comment type="catalytic activity">
    <reaction evidence="1">
        <text>L-threonylcarbamoyladenylate + adenosine(37) in tRNA = N(6)-L-threonylcarbamoyladenosine(37) in tRNA + AMP + H(+)</text>
        <dbReference type="Rhea" id="RHEA:37059"/>
        <dbReference type="Rhea" id="RHEA-COMP:10162"/>
        <dbReference type="Rhea" id="RHEA-COMP:10163"/>
        <dbReference type="ChEBI" id="CHEBI:15378"/>
        <dbReference type="ChEBI" id="CHEBI:73682"/>
        <dbReference type="ChEBI" id="CHEBI:74411"/>
        <dbReference type="ChEBI" id="CHEBI:74418"/>
        <dbReference type="ChEBI" id="CHEBI:456215"/>
        <dbReference type="EC" id="2.3.1.234"/>
    </reaction>
</comment>
<comment type="cofactor">
    <cofactor evidence="1">
        <name>Fe(2+)</name>
        <dbReference type="ChEBI" id="CHEBI:29033"/>
    </cofactor>
    <text evidence="1">Binds 1 Fe(2+) ion per subunit.</text>
</comment>
<comment type="subcellular location">
    <subcellularLocation>
        <location evidence="1">Cytoplasm</location>
    </subcellularLocation>
</comment>
<comment type="similarity">
    <text evidence="1">Belongs to the KAE1 / TsaD family.</text>
</comment>
<sequence length="350" mass="36959">MNILGIETSCDETSGAVLCSGQVRSNVVSSQRCHAHFGGVVPELASREHERLIVSIVDAAVTEANITKNDLDVIAATAGPGLIGAVMVGLCFAQGMAYALQIPFVPVNHIEAHIFSPFIQEDPFHSSPEGAFVSLTVSGGHTLLSVVEPDLSYSVIGRTLDDAAGEAFDKTGKMLGLPYPAGPVIDKLAEKGDPAFHLFPRALTSKSQTSKNYLGNFDFSFSGLKTSVLTWLQKQSAEFIEHHKADIAASIQYAIVSVLVEKTIAAARSRGIKSVSIAGGVSANSALRRAMKEACKREGITLHVPGTVYSTDNAAMIATLAALKLSRGMKAECCYNIAPYASFAAGSRMA</sequence>
<reference key="1">
    <citation type="submission" date="2008-06" db="EMBL/GenBank/DDBJ databases">
        <title>Complete sequence of Pelodictyon phaeoclathratiforme BU-1.</title>
        <authorList>
            <consortium name="US DOE Joint Genome Institute"/>
            <person name="Lucas S."/>
            <person name="Copeland A."/>
            <person name="Lapidus A."/>
            <person name="Glavina del Rio T."/>
            <person name="Dalin E."/>
            <person name="Tice H."/>
            <person name="Bruce D."/>
            <person name="Goodwin L."/>
            <person name="Pitluck S."/>
            <person name="Schmutz J."/>
            <person name="Larimer F."/>
            <person name="Land M."/>
            <person name="Hauser L."/>
            <person name="Kyrpides N."/>
            <person name="Mikhailova N."/>
            <person name="Liu Z."/>
            <person name="Li T."/>
            <person name="Zhao F."/>
            <person name="Overmann J."/>
            <person name="Bryant D.A."/>
            <person name="Richardson P."/>
        </authorList>
    </citation>
    <scope>NUCLEOTIDE SEQUENCE [LARGE SCALE GENOMIC DNA]</scope>
    <source>
        <strain>DSM 5477 / BU-1</strain>
    </source>
</reference>
<proteinExistence type="inferred from homology"/>
<gene>
    <name evidence="1" type="primary">tsaD</name>
    <name type="synonym">gcp</name>
    <name type="ordered locus">Ppha_0220</name>
</gene>
<accession>B4SBN2</accession>
<name>TSAD_PELPB</name>
<organism>
    <name type="scientific">Pelodictyon phaeoclathratiforme (strain DSM 5477 / BU-1)</name>
    <dbReference type="NCBI Taxonomy" id="324925"/>
    <lineage>
        <taxon>Bacteria</taxon>
        <taxon>Pseudomonadati</taxon>
        <taxon>Chlorobiota</taxon>
        <taxon>Chlorobiia</taxon>
        <taxon>Chlorobiales</taxon>
        <taxon>Chlorobiaceae</taxon>
        <taxon>Chlorobium/Pelodictyon group</taxon>
        <taxon>Pelodictyon</taxon>
    </lineage>
</organism>
<feature type="chain" id="PRO_1000146003" description="tRNA N6-adenosine threonylcarbamoyltransferase">
    <location>
        <begin position="1"/>
        <end position="350"/>
    </location>
</feature>
<feature type="binding site" evidence="1">
    <location>
        <position position="109"/>
    </location>
    <ligand>
        <name>Fe cation</name>
        <dbReference type="ChEBI" id="CHEBI:24875"/>
    </ligand>
</feature>
<feature type="binding site" evidence="1">
    <location>
        <position position="113"/>
    </location>
    <ligand>
        <name>Fe cation</name>
        <dbReference type="ChEBI" id="CHEBI:24875"/>
    </ligand>
</feature>
<feature type="binding site" evidence="1">
    <location>
        <begin position="136"/>
        <end position="140"/>
    </location>
    <ligand>
        <name>substrate</name>
    </ligand>
</feature>
<feature type="binding site" evidence="1">
    <location>
        <position position="169"/>
    </location>
    <ligand>
        <name>substrate</name>
    </ligand>
</feature>
<feature type="binding site" evidence="1">
    <location>
        <position position="182"/>
    </location>
    <ligand>
        <name>substrate</name>
    </ligand>
</feature>
<feature type="binding site" evidence="1">
    <location>
        <position position="186"/>
    </location>
    <ligand>
        <name>substrate</name>
    </ligand>
</feature>
<feature type="binding site" evidence="1">
    <location>
        <position position="284"/>
    </location>
    <ligand>
        <name>substrate</name>
    </ligand>
</feature>
<feature type="binding site" evidence="1">
    <location>
        <position position="312"/>
    </location>
    <ligand>
        <name>Fe cation</name>
        <dbReference type="ChEBI" id="CHEBI:24875"/>
    </ligand>
</feature>
<keyword id="KW-0012">Acyltransferase</keyword>
<keyword id="KW-0963">Cytoplasm</keyword>
<keyword id="KW-0408">Iron</keyword>
<keyword id="KW-0479">Metal-binding</keyword>
<keyword id="KW-1185">Reference proteome</keyword>
<keyword id="KW-0808">Transferase</keyword>
<keyword id="KW-0819">tRNA processing</keyword>
<protein>
    <recommendedName>
        <fullName evidence="1">tRNA N6-adenosine threonylcarbamoyltransferase</fullName>
        <ecNumber evidence="1">2.3.1.234</ecNumber>
    </recommendedName>
    <alternativeName>
        <fullName evidence="1">N6-L-threonylcarbamoyladenine synthase</fullName>
        <shortName evidence="1">t(6)A synthase</shortName>
    </alternativeName>
    <alternativeName>
        <fullName evidence="1">t(6)A37 threonylcarbamoyladenosine biosynthesis protein TsaD</fullName>
    </alternativeName>
    <alternativeName>
        <fullName evidence="1">tRNA threonylcarbamoyladenosine biosynthesis protein TsaD</fullName>
    </alternativeName>
</protein>